<sequence length="732" mass="82546">MAGACGKPHMSPASLPGKRRLEPDQELQIQEPPLLSDPDSSLSDSEESVFSGLEDLGSDSSEEDTEGVAGSSGDEDNHRAEETSEELAQAAPLCSRTEEAGALAQDEYEEDSSDEEDIRNTVGNVPLAWYDEFPHVGYDLDGKRIYKPLRTRDELDQFLDKMDDPDFWRTVQDKMTGRDLRLTDEQVALVHRLQRGQFGDSGFNPYEPAVDFFSGDIMIHPVTNRPADKRSFIPSLVEKEKVSRMVHAIKMGWIKPRRPHDPTPSFYDLWAQEDPNAVLGRHKMHVPAPKLALPGHAESYNPPPEYLPTEEERSAWMQQEPVERKLNFLPQKFPSLRTVPAYSRFIQERFERCLDLYLCPRQRKMRVNVDPEDLIPKLPRPRDLQPFPVCQALVYRGHSDLVRCLSVSPGGQWLASGSDDGTLKLWEVATARCMKTVHVGGVVRSIAWNPNPTICLVAAAMDDAVLLLNPALGDRLLVGSTDQLLEAFTPPEEPALQPARWLEVSEEEHQRGLRLRICHSKPVTQVTWHGRGDYLAVVLSSQEHTQVLLHQVSRRRSQSPFRRSHGQVQCVAFHPSRPFLLVASQRSIRIYHLLRQELTKKLMPNCKWVSSMAVHPAGDNIICGSYDSKLVWFDLDLSTKPYKVLRHHKKALRAVAFHPRYPLFASGSDDGSVIVCHGMVYNDLLQNPLLVPVKVLKGHTLTRDLGVLDVAFHPTQPWVFSSGADGTIRLFS</sequence>
<evidence type="ECO:0000250" key="1">
    <source>
        <dbReference type="UniProtKB" id="Q14137"/>
    </source>
</evidence>
<evidence type="ECO:0000255" key="2">
    <source>
        <dbReference type="HAMAP-Rule" id="MF_03027"/>
    </source>
</evidence>
<evidence type="ECO:0000256" key="3">
    <source>
        <dbReference type="SAM" id="MobiDB-lite"/>
    </source>
</evidence>
<evidence type="ECO:0000269" key="4">
    <source>
    </source>
</evidence>
<evidence type="ECO:0000269" key="5">
    <source>
    </source>
</evidence>
<evidence type="ECO:0000269" key="6">
    <source>
    </source>
</evidence>
<evidence type="ECO:0000269" key="7">
    <source>
    </source>
</evidence>
<evidence type="ECO:0000269" key="8">
    <source>
    </source>
</evidence>
<evidence type="ECO:0000305" key="9"/>
<evidence type="ECO:0007744" key="10">
    <source>
    </source>
</evidence>
<evidence type="ECO:0007744" key="11">
    <source>
    </source>
</evidence>
<accession>P97452</accession>
<accession>Q3TK87</accession>
<accession>Q6ZQI9</accession>
<accession>Q91X31</accession>
<name>BOP1_MOUSE</name>
<proteinExistence type="evidence at protein level"/>
<gene>
    <name type="primary">Bop1</name>
    <name type="synonym">Kiaa0124</name>
</gene>
<protein>
    <recommendedName>
        <fullName evidence="2">Ribosome biogenesis protein BOP1</fullName>
    </recommendedName>
    <alternativeName>
        <fullName evidence="2">Block of proliferation 1 protein</fullName>
    </alternativeName>
</protein>
<organism>
    <name type="scientific">Mus musculus</name>
    <name type="common">Mouse</name>
    <dbReference type="NCBI Taxonomy" id="10090"/>
    <lineage>
        <taxon>Eukaryota</taxon>
        <taxon>Metazoa</taxon>
        <taxon>Chordata</taxon>
        <taxon>Craniata</taxon>
        <taxon>Vertebrata</taxon>
        <taxon>Euteleostomi</taxon>
        <taxon>Mammalia</taxon>
        <taxon>Eutheria</taxon>
        <taxon>Euarchontoglires</taxon>
        <taxon>Glires</taxon>
        <taxon>Rodentia</taxon>
        <taxon>Myomorpha</taxon>
        <taxon>Muroidea</taxon>
        <taxon>Muridae</taxon>
        <taxon>Murinae</taxon>
        <taxon>Mus</taxon>
        <taxon>Mus</taxon>
    </lineage>
</organism>
<feature type="chain" id="PRO_0000050886" description="Ribosome biogenesis protein BOP1">
    <location>
        <begin position="1"/>
        <end position="732"/>
    </location>
</feature>
<feature type="repeat" description="WD 1">
    <location>
        <begin position="397"/>
        <end position="436"/>
    </location>
</feature>
<feature type="repeat" description="WD 2">
    <location>
        <begin position="438"/>
        <end position="478"/>
    </location>
</feature>
<feature type="repeat" description="WD 3">
    <location>
        <begin position="518"/>
        <end position="560"/>
    </location>
</feature>
<feature type="repeat" description="WD 4">
    <location>
        <begin position="563"/>
        <end position="601"/>
    </location>
</feature>
<feature type="repeat" description="WD 5">
    <location>
        <begin position="604"/>
        <end position="643"/>
    </location>
</feature>
<feature type="repeat" description="WD 6">
    <location>
        <begin position="647"/>
        <end position="686"/>
    </location>
</feature>
<feature type="repeat" description="WD 7">
    <location>
        <begin position="702"/>
        <end position="732"/>
    </location>
</feature>
<feature type="region of interest" description="Disordered" evidence="3">
    <location>
        <begin position="1"/>
        <end position="93"/>
    </location>
</feature>
<feature type="region of interest" description="Sufficient for nucleolar localization">
    <location>
        <begin position="251"/>
        <end position="413"/>
    </location>
</feature>
<feature type="compositionally biased region" description="Low complexity" evidence="3">
    <location>
        <begin position="31"/>
        <end position="43"/>
    </location>
</feature>
<feature type="compositionally biased region" description="Acidic residues" evidence="3">
    <location>
        <begin position="56"/>
        <end position="66"/>
    </location>
</feature>
<feature type="modified residue" description="Phosphotyrosine" evidence="1">
    <location>
        <position position="108"/>
    </location>
</feature>
<feature type="modified residue" description="Phosphoserine" evidence="10 11">
    <location>
        <position position="112"/>
    </location>
</feature>
<feature type="modified residue" description="Phosphoserine" evidence="10 11">
    <location>
        <position position="113"/>
    </location>
</feature>
<feature type="sequence conflict" description="In Ref. 2; BAC97868 and 4; AAH12693." evidence="9" ref="2 4">
    <original>L</original>
    <variation>S</variation>
    <location>
        <position position="56"/>
    </location>
</feature>
<feature type="sequence conflict" description="In Ref. 2; BAC97868." evidence="9" ref="2">
    <original>P</original>
    <variation>L</variation>
    <location>
        <position position="234"/>
    </location>
</feature>
<dbReference type="EMBL" id="U77415">
    <property type="protein sequence ID" value="AAB19223.1"/>
    <property type="molecule type" value="mRNA"/>
</dbReference>
<dbReference type="EMBL" id="AK129058">
    <property type="protein sequence ID" value="BAC97868.1"/>
    <property type="status" value="ALT_INIT"/>
    <property type="molecule type" value="mRNA"/>
</dbReference>
<dbReference type="EMBL" id="AK079627">
    <property type="protein sequence ID" value="BAC37708.1"/>
    <property type="molecule type" value="mRNA"/>
</dbReference>
<dbReference type="EMBL" id="AK167110">
    <property type="protein sequence ID" value="BAE39258.1"/>
    <property type="molecule type" value="mRNA"/>
</dbReference>
<dbReference type="EMBL" id="BC012693">
    <property type="protein sequence ID" value="AAH12693.1"/>
    <property type="molecule type" value="mRNA"/>
</dbReference>
<dbReference type="EMBL" id="AF061503">
    <property type="protein sequence ID" value="AAC80429.1"/>
    <property type="molecule type" value="Genomic_DNA"/>
</dbReference>
<dbReference type="CCDS" id="CCDS27570.1"/>
<dbReference type="RefSeq" id="NP_038509.1">
    <property type="nucleotide sequence ID" value="NM_013481.2"/>
</dbReference>
<dbReference type="SMR" id="P97452"/>
<dbReference type="BioGRID" id="198380">
    <property type="interactions" value="7"/>
</dbReference>
<dbReference type="CORUM" id="P97452"/>
<dbReference type="FunCoup" id="P97452">
    <property type="interactions" value="2154"/>
</dbReference>
<dbReference type="IntAct" id="P97452">
    <property type="interactions" value="1"/>
</dbReference>
<dbReference type="MINT" id="P97452"/>
<dbReference type="STRING" id="10090.ENSMUSP00000023217"/>
<dbReference type="GlyGen" id="P97452">
    <property type="glycosylation" value="2 sites, 1 O-linked glycan (1 site)"/>
</dbReference>
<dbReference type="iPTMnet" id="P97452"/>
<dbReference type="PhosphoSitePlus" id="P97452"/>
<dbReference type="SwissPalm" id="P97452"/>
<dbReference type="jPOST" id="P97452"/>
<dbReference type="PaxDb" id="10090-ENSMUSP00000023217"/>
<dbReference type="PeptideAtlas" id="P97452"/>
<dbReference type="ProteomicsDB" id="273759"/>
<dbReference type="Pumba" id="P97452"/>
<dbReference type="Antibodypedia" id="59721">
    <property type="antibodies" value="149 antibodies from 22 providers"/>
</dbReference>
<dbReference type="DNASU" id="12181"/>
<dbReference type="Ensembl" id="ENSMUST00000023217.11">
    <property type="protein sequence ID" value="ENSMUSP00000023217.10"/>
    <property type="gene ID" value="ENSMUSG00000022557.12"/>
</dbReference>
<dbReference type="GeneID" id="12181"/>
<dbReference type="KEGG" id="mmu:12181"/>
<dbReference type="UCSC" id="uc007wkf.1">
    <property type="organism name" value="mouse"/>
</dbReference>
<dbReference type="AGR" id="MGI:1334460"/>
<dbReference type="CTD" id="23246"/>
<dbReference type="MGI" id="MGI:1334460">
    <property type="gene designation" value="Bop1"/>
</dbReference>
<dbReference type="VEuPathDB" id="HostDB:ENSMUSG00000022557"/>
<dbReference type="eggNOG" id="KOG0650">
    <property type="taxonomic scope" value="Eukaryota"/>
</dbReference>
<dbReference type="GeneTree" id="ENSGT00390000018422"/>
<dbReference type="HOGENOM" id="CLU_011390_1_0_1"/>
<dbReference type="InParanoid" id="P97452"/>
<dbReference type="OMA" id="MRPAKGE"/>
<dbReference type="OrthoDB" id="5571054at2759"/>
<dbReference type="PhylomeDB" id="P97452"/>
<dbReference type="TreeFam" id="TF300437"/>
<dbReference type="Reactome" id="R-MMU-6791226">
    <property type="pathway name" value="Major pathway of rRNA processing in the nucleolus and cytosol"/>
</dbReference>
<dbReference type="BioGRID-ORCS" id="12181">
    <property type="hits" value="26 hits in 81 CRISPR screens"/>
</dbReference>
<dbReference type="ChiTaRS" id="Bop1">
    <property type="organism name" value="mouse"/>
</dbReference>
<dbReference type="PRO" id="PR:P97452"/>
<dbReference type="Proteomes" id="UP000000589">
    <property type="component" value="Chromosome 15"/>
</dbReference>
<dbReference type="RNAct" id="P97452">
    <property type="molecule type" value="protein"/>
</dbReference>
<dbReference type="Bgee" id="ENSMUSG00000022557">
    <property type="expression patterns" value="Expressed in otic placode and 279 other cell types or tissues"/>
</dbReference>
<dbReference type="GO" id="GO:0005694">
    <property type="term" value="C:chromosome"/>
    <property type="evidence" value="ECO:0007669"/>
    <property type="project" value="Ensembl"/>
</dbReference>
<dbReference type="GO" id="GO:0005730">
    <property type="term" value="C:nucleolus"/>
    <property type="evidence" value="ECO:0000314"/>
    <property type="project" value="UniProtKB"/>
</dbReference>
<dbReference type="GO" id="GO:0005654">
    <property type="term" value="C:nucleoplasm"/>
    <property type="evidence" value="ECO:0007669"/>
    <property type="project" value="UniProtKB-SubCell"/>
</dbReference>
<dbReference type="GO" id="GO:0070545">
    <property type="term" value="C:PeBoW complex"/>
    <property type="evidence" value="ECO:0000250"/>
    <property type="project" value="UniProtKB"/>
</dbReference>
<dbReference type="GO" id="GO:0030687">
    <property type="term" value="C:preribosome, large subunit precursor"/>
    <property type="evidence" value="ECO:0007669"/>
    <property type="project" value="UniProtKB-UniRule"/>
</dbReference>
<dbReference type="GO" id="GO:1990904">
    <property type="term" value="C:ribonucleoprotein complex"/>
    <property type="evidence" value="ECO:0000266"/>
    <property type="project" value="MGI"/>
</dbReference>
<dbReference type="GO" id="GO:0043021">
    <property type="term" value="F:ribonucleoprotein complex binding"/>
    <property type="evidence" value="ECO:0000314"/>
    <property type="project" value="MGI"/>
</dbReference>
<dbReference type="GO" id="GO:0008283">
    <property type="term" value="P:cell population proliferation"/>
    <property type="evidence" value="ECO:0000315"/>
    <property type="project" value="UniProtKB"/>
</dbReference>
<dbReference type="GO" id="GO:0000448">
    <property type="term" value="P:cleavage in ITS2 between 5.8S rRNA and LSU-rRNA of tricistronic rRNA transcript (SSU-rRNA, 5.8S rRNA, LSU-rRNA)"/>
    <property type="evidence" value="ECO:0000315"/>
    <property type="project" value="UniProtKB"/>
</dbReference>
<dbReference type="GO" id="GO:0000460">
    <property type="term" value="P:maturation of 5.8S rRNA"/>
    <property type="evidence" value="ECO:0000315"/>
    <property type="project" value="UniProtKB"/>
</dbReference>
<dbReference type="GO" id="GO:0000463">
    <property type="term" value="P:maturation of LSU-rRNA from tricistronic rRNA transcript (SSU-rRNA, 5.8S rRNA, LSU-rRNA)"/>
    <property type="evidence" value="ECO:0000250"/>
    <property type="project" value="UniProtKB"/>
</dbReference>
<dbReference type="GO" id="GO:0051726">
    <property type="term" value="P:regulation of cell cycle"/>
    <property type="evidence" value="ECO:0000250"/>
    <property type="project" value="UniProtKB"/>
</dbReference>
<dbReference type="GO" id="GO:1901796">
    <property type="term" value="P:regulation of signal transduction by p53 class mediator"/>
    <property type="evidence" value="ECO:0007669"/>
    <property type="project" value="Ensembl"/>
</dbReference>
<dbReference type="GO" id="GO:0000027">
    <property type="term" value="P:ribosomal large subunit assembly"/>
    <property type="evidence" value="ECO:0007669"/>
    <property type="project" value="Ensembl"/>
</dbReference>
<dbReference type="GO" id="GO:0042273">
    <property type="term" value="P:ribosomal large subunit biogenesis"/>
    <property type="evidence" value="ECO:0000315"/>
    <property type="project" value="UniProtKB"/>
</dbReference>
<dbReference type="GO" id="GO:0006364">
    <property type="term" value="P:rRNA processing"/>
    <property type="evidence" value="ECO:0000315"/>
    <property type="project" value="MGI"/>
</dbReference>
<dbReference type="CDD" id="cd00200">
    <property type="entry name" value="WD40"/>
    <property type="match status" value="1"/>
</dbReference>
<dbReference type="FunFam" id="2.130.10.10:FF:000061">
    <property type="entry name" value="Ribosome biogenesis protein BOP1 homolog"/>
    <property type="match status" value="1"/>
</dbReference>
<dbReference type="Gene3D" id="2.130.10.10">
    <property type="entry name" value="YVTN repeat-like/Quinoprotein amine dehydrogenase"/>
    <property type="match status" value="1"/>
</dbReference>
<dbReference type="HAMAP" id="MF_03027">
    <property type="entry name" value="BOP1"/>
    <property type="match status" value="1"/>
</dbReference>
<dbReference type="InterPro" id="IPR028598">
    <property type="entry name" value="BOP1/Erb1"/>
</dbReference>
<dbReference type="InterPro" id="IPR012953">
    <property type="entry name" value="BOP1_N_dom"/>
</dbReference>
<dbReference type="InterPro" id="IPR015943">
    <property type="entry name" value="WD40/YVTN_repeat-like_dom_sf"/>
</dbReference>
<dbReference type="InterPro" id="IPR019775">
    <property type="entry name" value="WD40_repeat_CS"/>
</dbReference>
<dbReference type="InterPro" id="IPR036322">
    <property type="entry name" value="WD40_repeat_dom_sf"/>
</dbReference>
<dbReference type="InterPro" id="IPR001680">
    <property type="entry name" value="WD40_rpt"/>
</dbReference>
<dbReference type="PANTHER" id="PTHR17605:SF0">
    <property type="entry name" value="RIBOSOME BIOGENESIS PROTEIN BOP1"/>
    <property type="match status" value="1"/>
</dbReference>
<dbReference type="PANTHER" id="PTHR17605">
    <property type="entry name" value="RIBOSOME BIOGENESIS PROTEIN BOP1 BLOCK OF PROLIFERATION 1 PROTEIN"/>
    <property type="match status" value="1"/>
</dbReference>
<dbReference type="Pfam" id="PF08145">
    <property type="entry name" value="BOP1NT"/>
    <property type="match status" value="1"/>
</dbReference>
<dbReference type="Pfam" id="PF00400">
    <property type="entry name" value="WD40"/>
    <property type="match status" value="5"/>
</dbReference>
<dbReference type="SMART" id="SM01035">
    <property type="entry name" value="BOP1NT"/>
    <property type="match status" value="1"/>
</dbReference>
<dbReference type="SMART" id="SM00320">
    <property type="entry name" value="WD40"/>
    <property type="match status" value="7"/>
</dbReference>
<dbReference type="SUPFAM" id="SSF50978">
    <property type="entry name" value="WD40 repeat-like"/>
    <property type="match status" value="1"/>
</dbReference>
<dbReference type="PROSITE" id="PS00678">
    <property type="entry name" value="WD_REPEATS_1"/>
    <property type="match status" value="1"/>
</dbReference>
<dbReference type="PROSITE" id="PS50082">
    <property type="entry name" value="WD_REPEATS_2"/>
    <property type="match status" value="3"/>
</dbReference>
<dbReference type="PROSITE" id="PS50294">
    <property type="entry name" value="WD_REPEATS_REGION"/>
    <property type="match status" value="1"/>
</dbReference>
<comment type="function">
    <text evidence="2 4 5 6">Component of the PeBoW complex, which is required for maturation of 28S and 5.8S ribosomal RNAs and formation of the 60S ribosome.</text>
</comment>
<comment type="subunit">
    <text evidence="2 7 8">Component of the PeBoW complex, composed of BOP1, PES1 and WDR12 (PubMed:15225545, PubMed:17353269). The complex is held together by BOP1, which interacts with PES1 via its N-terminal domain and with WDR12 via a high-affinity interaction between the seven-bladed beta-propeller domains of the 2 proteins. The NOP7 complex associates with the 66S pre-ribosome. The PeBoW complex associates with DDX27, BOP1 interacts directly with DDX27 (By similarity).</text>
</comment>
<comment type="subcellular location">
    <subcellularLocation>
        <location>Nucleus</location>
        <location>Nucleolus</location>
    </subcellularLocation>
    <subcellularLocation>
        <location>Nucleus</location>
        <location>Nucleoplasm</location>
    </subcellularLocation>
</comment>
<comment type="tissue specificity">
    <text>Expressed in brain, gut, heart, kidney, liver, lung, muscle, ovary, skin, spleen and testis.</text>
</comment>
<comment type="induction">
    <text evidence="4">Expression in quiescent fibroblasts is induced by serum stimulation.</text>
</comment>
<comment type="similarity">
    <text evidence="2">Belongs to the WD repeat BOP1/ERB1 family.</text>
</comment>
<comment type="sequence caution" evidence="9">
    <conflict type="erroneous initiation">
        <sequence resource="EMBL-CDS" id="BAC97868"/>
    </conflict>
</comment>
<reference key="1">
    <citation type="journal article" date="1998" name="Oncogene">
        <title>Isolation of growth suppressors from a cDNA expression library.</title>
        <authorList>
            <person name="Pestov D.G."/>
            <person name="Grzeszkiewicz T.M."/>
            <person name="Lau L.F."/>
        </authorList>
    </citation>
    <scope>NUCLEOTIDE SEQUENCE [MRNA]</scope>
    <source>
        <strain>SWR/J</strain>
    </source>
</reference>
<reference key="2">
    <citation type="journal article" date="2003" name="DNA Res.">
        <title>Prediction of the coding sequences of mouse homologues of KIAA gene: III. The complete nucleotide sequences of 500 mouse KIAA-homologous cDNAs identified by screening of terminal sequences of cDNA clones randomly sampled from size-fractionated libraries.</title>
        <authorList>
            <person name="Okazaki N."/>
            <person name="Kikuno R."/>
            <person name="Ohara R."/>
            <person name="Inamoto S."/>
            <person name="Koseki H."/>
            <person name="Hiraoka S."/>
            <person name="Saga Y."/>
            <person name="Nagase T."/>
            <person name="Ohara O."/>
            <person name="Koga H."/>
        </authorList>
    </citation>
    <scope>NUCLEOTIDE SEQUENCE [LARGE SCALE MRNA]</scope>
    <source>
        <tissue>Embryonic tail</tissue>
    </source>
</reference>
<reference key="3">
    <citation type="journal article" date="2005" name="Science">
        <title>The transcriptional landscape of the mammalian genome.</title>
        <authorList>
            <person name="Carninci P."/>
            <person name="Kasukawa T."/>
            <person name="Katayama S."/>
            <person name="Gough J."/>
            <person name="Frith M.C."/>
            <person name="Maeda N."/>
            <person name="Oyama R."/>
            <person name="Ravasi T."/>
            <person name="Lenhard B."/>
            <person name="Wells C."/>
            <person name="Kodzius R."/>
            <person name="Shimokawa K."/>
            <person name="Bajic V.B."/>
            <person name="Brenner S.E."/>
            <person name="Batalov S."/>
            <person name="Forrest A.R."/>
            <person name="Zavolan M."/>
            <person name="Davis M.J."/>
            <person name="Wilming L.G."/>
            <person name="Aidinis V."/>
            <person name="Allen J.E."/>
            <person name="Ambesi-Impiombato A."/>
            <person name="Apweiler R."/>
            <person name="Aturaliya R.N."/>
            <person name="Bailey T.L."/>
            <person name="Bansal M."/>
            <person name="Baxter L."/>
            <person name="Beisel K.W."/>
            <person name="Bersano T."/>
            <person name="Bono H."/>
            <person name="Chalk A.M."/>
            <person name="Chiu K.P."/>
            <person name="Choudhary V."/>
            <person name="Christoffels A."/>
            <person name="Clutterbuck D.R."/>
            <person name="Crowe M.L."/>
            <person name="Dalla E."/>
            <person name="Dalrymple B.P."/>
            <person name="de Bono B."/>
            <person name="Della Gatta G."/>
            <person name="di Bernardo D."/>
            <person name="Down T."/>
            <person name="Engstrom P."/>
            <person name="Fagiolini M."/>
            <person name="Faulkner G."/>
            <person name="Fletcher C.F."/>
            <person name="Fukushima T."/>
            <person name="Furuno M."/>
            <person name="Futaki S."/>
            <person name="Gariboldi M."/>
            <person name="Georgii-Hemming P."/>
            <person name="Gingeras T.R."/>
            <person name="Gojobori T."/>
            <person name="Green R.E."/>
            <person name="Gustincich S."/>
            <person name="Harbers M."/>
            <person name="Hayashi Y."/>
            <person name="Hensch T.K."/>
            <person name="Hirokawa N."/>
            <person name="Hill D."/>
            <person name="Huminiecki L."/>
            <person name="Iacono M."/>
            <person name="Ikeo K."/>
            <person name="Iwama A."/>
            <person name="Ishikawa T."/>
            <person name="Jakt M."/>
            <person name="Kanapin A."/>
            <person name="Katoh M."/>
            <person name="Kawasawa Y."/>
            <person name="Kelso J."/>
            <person name="Kitamura H."/>
            <person name="Kitano H."/>
            <person name="Kollias G."/>
            <person name="Krishnan S.P."/>
            <person name="Kruger A."/>
            <person name="Kummerfeld S.K."/>
            <person name="Kurochkin I.V."/>
            <person name="Lareau L.F."/>
            <person name="Lazarevic D."/>
            <person name="Lipovich L."/>
            <person name="Liu J."/>
            <person name="Liuni S."/>
            <person name="McWilliam S."/>
            <person name="Madan Babu M."/>
            <person name="Madera M."/>
            <person name="Marchionni L."/>
            <person name="Matsuda H."/>
            <person name="Matsuzawa S."/>
            <person name="Miki H."/>
            <person name="Mignone F."/>
            <person name="Miyake S."/>
            <person name="Morris K."/>
            <person name="Mottagui-Tabar S."/>
            <person name="Mulder N."/>
            <person name="Nakano N."/>
            <person name="Nakauchi H."/>
            <person name="Ng P."/>
            <person name="Nilsson R."/>
            <person name="Nishiguchi S."/>
            <person name="Nishikawa S."/>
            <person name="Nori F."/>
            <person name="Ohara O."/>
            <person name="Okazaki Y."/>
            <person name="Orlando V."/>
            <person name="Pang K.C."/>
            <person name="Pavan W.J."/>
            <person name="Pavesi G."/>
            <person name="Pesole G."/>
            <person name="Petrovsky N."/>
            <person name="Piazza S."/>
            <person name="Reed J."/>
            <person name="Reid J.F."/>
            <person name="Ring B.Z."/>
            <person name="Ringwald M."/>
            <person name="Rost B."/>
            <person name="Ruan Y."/>
            <person name="Salzberg S.L."/>
            <person name="Sandelin A."/>
            <person name="Schneider C."/>
            <person name="Schoenbach C."/>
            <person name="Sekiguchi K."/>
            <person name="Semple C.A."/>
            <person name="Seno S."/>
            <person name="Sessa L."/>
            <person name="Sheng Y."/>
            <person name="Shibata Y."/>
            <person name="Shimada H."/>
            <person name="Shimada K."/>
            <person name="Silva D."/>
            <person name="Sinclair B."/>
            <person name="Sperling S."/>
            <person name="Stupka E."/>
            <person name="Sugiura K."/>
            <person name="Sultana R."/>
            <person name="Takenaka Y."/>
            <person name="Taki K."/>
            <person name="Tammoja K."/>
            <person name="Tan S.L."/>
            <person name="Tang S."/>
            <person name="Taylor M.S."/>
            <person name="Tegner J."/>
            <person name="Teichmann S.A."/>
            <person name="Ueda H.R."/>
            <person name="van Nimwegen E."/>
            <person name="Verardo R."/>
            <person name="Wei C.L."/>
            <person name="Yagi K."/>
            <person name="Yamanishi H."/>
            <person name="Zabarovsky E."/>
            <person name="Zhu S."/>
            <person name="Zimmer A."/>
            <person name="Hide W."/>
            <person name="Bult C."/>
            <person name="Grimmond S.M."/>
            <person name="Teasdale R.D."/>
            <person name="Liu E.T."/>
            <person name="Brusic V."/>
            <person name="Quackenbush J."/>
            <person name="Wahlestedt C."/>
            <person name="Mattick J.S."/>
            <person name="Hume D.A."/>
            <person name="Kai C."/>
            <person name="Sasaki D."/>
            <person name="Tomaru Y."/>
            <person name="Fukuda S."/>
            <person name="Kanamori-Katayama M."/>
            <person name="Suzuki M."/>
            <person name="Aoki J."/>
            <person name="Arakawa T."/>
            <person name="Iida J."/>
            <person name="Imamura K."/>
            <person name="Itoh M."/>
            <person name="Kato T."/>
            <person name="Kawaji H."/>
            <person name="Kawagashira N."/>
            <person name="Kawashima T."/>
            <person name="Kojima M."/>
            <person name="Kondo S."/>
            <person name="Konno H."/>
            <person name="Nakano K."/>
            <person name="Ninomiya N."/>
            <person name="Nishio T."/>
            <person name="Okada M."/>
            <person name="Plessy C."/>
            <person name="Shibata K."/>
            <person name="Shiraki T."/>
            <person name="Suzuki S."/>
            <person name="Tagami M."/>
            <person name="Waki K."/>
            <person name="Watahiki A."/>
            <person name="Okamura-Oho Y."/>
            <person name="Suzuki H."/>
            <person name="Kawai J."/>
            <person name="Hayashizaki Y."/>
        </authorList>
    </citation>
    <scope>NUCLEOTIDE SEQUENCE [LARGE SCALE MRNA]</scope>
    <source>
        <strain>C57BL/6J</strain>
        <tissue>Spinal cord</tissue>
    </source>
</reference>
<reference key="4">
    <citation type="journal article" date="2004" name="Genome Res.">
        <title>The status, quality, and expansion of the NIH full-length cDNA project: the Mammalian Gene Collection (MGC).</title>
        <authorList>
            <consortium name="The MGC Project Team"/>
        </authorList>
    </citation>
    <scope>NUCLEOTIDE SEQUENCE [LARGE SCALE MRNA]</scope>
    <source>
        <tissue>Salivary gland</tissue>
    </source>
</reference>
<reference key="5">
    <citation type="submission" date="1998-04" db="EMBL/GenBank/DDBJ databases">
        <title>Sequence of the bidirectional promoter mouse heat shock transcription factor I and Bop1.</title>
        <authorList>
            <person name="Zhang Y."/>
            <person name="Koushik S."/>
            <person name="Dai R."/>
            <person name="Mivechi N.F."/>
        </authorList>
    </citation>
    <scope>NUCLEOTIDE SEQUENCE [GENOMIC DNA] OF 1-89</scope>
    <source>
        <strain>129/SvJ</strain>
        <tissue>Liver</tissue>
    </source>
</reference>
<reference key="6">
    <citation type="journal article" date="2000" name="Mol. Cell. Biol.">
        <title>Bop1 is a mouse WD40 repeat nucleolar protein involved in 28S and 5. 8S rRNA processing and 60S ribosome biogenesis.</title>
        <authorList>
            <person name="Strezoska Z."/>
            <person name="Pestov D.G."/>
            <person name="Lau L.F."/>
        </authorList>
    </citation>
    <scope>FUNCTION</scope>
    <scope>SUBCELLULAR LOCATION</scope>
    <scope>DEVELOPMENTAL STAGE</scope>
    <scope>INDUCTION</scope>
</reference>
<reference key="7">
    <citation type="journal article" date="2001" name="Mol. Cell. Biol.">
        <title>Evidence of p53-dependent cross-talk between ribosome biogenesis and the cell cycle: effects of nucleolar protein Bop1 on G(1)/S transition.</title>
        <authorList>
            <person name="Pestov D.G."/>
            <person name="Strezoska Z."/>
            <person name="Lau L.F."/>
        </authorList>
    </citation>
    <scope>FUNCTION</scope>
</reference>
<reference key="8">
    <citation type="journal article" date="2002" name="J. Biol. Chem.">
        <title>Functional inactivation of the mouse nucleolar protein Bop1 inhibits multiple steps in pre-rRNA processing and blocks cell cycle progression.</title>
        <authorList>
            <person name="Strezoska Z."/>
            <person name="Pestov D.G."/>
            <person name="Lau L.F."/>
        </authorList>
    </citation>
    <scope>FUNCTION</scope>
    <scope>SUBCELLULAR LOCATION</scope>
</reference>
<reference key="9">
    <citation type="journal article" date="2004" name="Mol. Cell">
        <title>Physical and functional interaction between Pes1 and Bop1 in mammalian ribosome biogenesis.</title>
        <authorList>
            <person name="Lapik Y.R."/>
            <person name="Fernandes C.J."/>
            <person name="Lau L.F."/>
            <person name="Pestov D.G."/>
        </authorList>
    </citation>
    <scope>INTERACTION WITH PES1</scope>
</reference>
<reference key="10">
    <citation type="journal article" date="2007" name="Mol. Cell. Biol.">
        <title>Interdependence of Pes1, Bop1, and WDR12 controls nucleolar localization and assembly of the PeBoW complex required for maturation of the 60S ribosomal subunit.</title>
        <authorList>
            <person name="Rohrmoser M."/>
            <person name="Hoelzel M."/>
            <person name="Grimm T."/>
            <person name="Malamoussi A."/>
            <person name="Harasim T."/>
            <person name="Orban M."/>
            <person name="Pfisterer I."/>
            <person name="Gruber-Eber A."/>
            <person name="Kremmer E."/>
            <person name="Eick D."/>
        </authorList>
    </citation>
    <scope>INTERACTION WITH PES1 AND WDR12</scope>
    <scope>SUBCELLULAR LOCATION</scope>
</reference>
<reference key="11">
    <citation type="journal article" date="2007" name="Proc. Natl. Acad. Sci. U.S.A.">
        <title>Large-scale phosphorylation analysis of mouse liver.</title>
        <authorList>
            <person name="Villen J."/>
            <person name="Beausoleil S.A."/>
            <person name="Gerber S.A."/>
            <person name="Gygi S.P."/>
        </authorList>
    </citation>
    <scope>PHOSPHORYLATION [LARGE SCALE ANALYSIS] AT SER-112 AND SER-113</scope>
    <scope>IDENTIFICATION BY MASS SPECTROMETRY [LARGE SCALE ANALYSIS]</scope>
    <source>
        <tissue>Liver</tissue>
    </source>
</reference>
<reference key="12">
    <citation type="journal article" date="2010" name="Cell">
        <title>A tissue-specific atlas of mouse protein phosphorylation and expression.</title>
        <authorList>
            <person name="Huttlin E.L."/>
            <person name="Jedrychowski M.P."/>
            <person name="Elias J.E."/>
            <person name="Goswami T."/>
            <person name="Rad R."/>
            <person name="Beausoleil S.A."/>
            <person name="Villen J."/>
            <person name="Haas W."/>
            <person name="Sowa M.E."/>
            <person name="Gygi S.P."/>
        </authorList>
    </citation>
    <scope>PHOSPHORYLATION [LARGE SCALE ANALYSIS] AT SER-112 AND SER-113</scope>
    <scope>IDENTIFICATION BY MASS SPECTROMETRY [LARGE SCALE ANALYSIS]</scope>
    <source>
        <tissue>Kidney</tissue>
        <tissue>Liver</tissue>
        <tissue>Lung</tissue>
        <tissue>Pancreas</tissue>
        <tissue>Spleen</tissue>
        <tissue>Testis</tissue>
    </source>
</reference>
<keyword id="KW-0539">Nucleus</keyword>
<keyword id="KW-0597">Phosphoprotein</keyword>
<keyword id="KW-1185">Reference proteome</keyword>
<keyword id="KW-0677">Repeat</keyword>
<keyword id="KW-0690">Ribosome biogenesis</keyword>
<keyword id="KW-0698">rRNA processing</keyword>
<keyword id="KW-0853">WD repeat</keyword>